<organism>
    <name type="scientific">Aspergillus fumigatus (strain ATCC MYA-4609 / CBS 101355 / FGSC A1100 / Af293)</name>
    <name type="common">Neosartorya fumigata</name>
    <dbReference type="NCBI Taxonomy" id="330879"/>
    <lineage>
        <taxon>Eukaryota</taxon>
        <taxon>Fungi</taxon>
        <taxon>Dikarya</taxon>
        <taxon>Ascomycota</taxon>
        <taxon>Pezizomycotina</taxon>
        <taxon>Eurotiomycetes</taxon>
        <taxon>Eurotiomycetidae</taxon>
        <taxon>Eurotiales</taxon>
        <taxon>Aspergillaceae</taxon>
        <taxon>Aspergillus</taxon>
        <taxon>Aspergillus subgen. Fumigati</taxon>
    </lineage>
</organism>
<proteinExistence type="inferred from homology"/>
<accession>Q4WHL1</accession>
<keyword id="KW-0072">Autophagy</keyword>
<keyword id="KW-0967">Endosome</keyword>
<keyword id="KW-0472">Membrane</keyword>
<keyword id="KW-0653">Protein transport</keyword>
<keyword id="KW-1185">Reference proteome</keyword>
<keyword id="KW-0813">Transport</keyword>
<keyword id="KW-0926">Vacuole</keyword>
<dbReference type="EMBL" id="AAHF01000008">
    <property type="protein sequence ID" value="EAL87594.1"/>
    <property type="status" value="ALT_SEQ"/>
    <property type="molecule type" value="Genomic_DNA"/>
</dbReference>
<dbReference type="RefSeq" id="XP_749632.1">
    <property type="nucleotide sequence ID" value="XM_744539.1"/>
</dbReference>
<dbReference type="SMR" id="Q4WHL1"/>
<dbReference type="FunCoup" id="Q4WHL1">
    <property type="interactions" value="549"/>
</dbReference>
<dbReference type="STRING" id="330879.Q4WHL1"/>
<dbReference type="GeneID" id="3507032"/>
<dbReference type="KEGG" id="afm:AFUA_2G05010"/>
<dbReference type="eggNOG" id="KOG0997">
    <property type="taxonomic scope" value="Eukaryota"/>
</dbReference>
<dbReference type="HOGENOM" id="CLU_014574_4_0_1"/>
<dbReference type="InParanoid" id="Q4WHL1"/>
<dbReference type="OrthoDB" id="272411at2759"/>
<dbReference type="Proteomes" id="UP000002530">
    <property type="component" value="Chromosome 2"/>
</dbReference>
<dbReference type="GO" id="GO:0000329">
    <property type="term" value="C:fungal-type vacuole membrane"/>
    <property type="evidence" value="ECO:0000318"/>
    <property type="project" value="GO_Central"/>
</dbReference>
<dbReference type="GO" id="GO:0035658">
    <property type="term" value="C:Mon1-Ccz1 complex"/>
    <property type="evidence" value="ECO:0000318"/>
    <property type="project" value="GO_Central"/>
</dbReference>
<dbReference type="GO" id="GO:0032585">
    <property type="term" value="C:multivesicular body membrane"/>
    <property type="evidence" value="ECO:0007669"/>
    <property type="project" value="UniProtKB-SubCell"/>
</dbReference>
<dbReference type="GO" id="GO:0006914">
    <property type="term" value="P:autophagy"/>
    <property type="evidence" value="ECO:0007669"/>
    <property type="project" value="UniProtKB-KW"/>
</dbReference>
<dbReference type="GO" id="GO:0006623">
    <property type="term" value="P:protein targeting to vacuole"/>
    <property type="evidence" value="ECO:0000318"/>
    <property type="project" value="GO_Central"/>
</dbReference>
<dbReference type="GO" id="GO:0016192">
    <property type="term" value="P:vesicle-mediated transport"/>
    <property type="evidence" value="ECO:0007669"/>
    <property type="project" value="InterPro"/>
</dbReference>
<dbReference type="InterPro" id="IPR043972">
    <property type="entry name" value="FUZ/MON1/HPS1_longin_1"/>
</dbReference>
<dbReference type="InterPro" id="IPR043971">
    <property type="entry name" value="FUZ/MON1/HPS1_longin_2"/>
</dbReference>
<dbReference type="InterPro" id="IPR043970">
    <property type="entry name" value="FUZ/MON1/HPS1_longin_3"/>
</dbReference>
<dbReference type="InterPro" id="IPR004353">
    <property type="entry name" value="Mon1"/>
</dbReference>
<dbReference type="PANTHER" id="PTHR13027">
    <property type="entry name" value="SAND PROTEIN-RELATED"/>
    <property type="match status" value="1"/>
</dbReference>
<dbReference type="PANTHER" id="PTHR13027:SF7">
    <property type="entry name" value="VACUOLAR FUSION PROTEIN MON1 HOMOLOG"/>
    <property type="match status" value="1"/>
</dbReference>
<dbReference type="Pfam" id="PF19036">
    <property type="entry name" value="Fuz_longin_1"/>
    <property type="match status" value="1"/>
</dbReference>
<dbReference type="Pfam" id="PF19037">
    <property type="entry name" value="Fuz_longin_2"/>
    <property type="match status" value="1"/>
</dbReference>
<dbReference type="Pfam" id="PF19038">
    <property type="entry name" value="Fuz_longin_3"/>
    <property type="match status" value="1"/>
</dbReference>
<dbReference type="PRINTS" id="PR01546">
    <property type="entry name" value="YEAST73DUF"/>
</dbReference>
<reference key="1">
    <citation type="journal article" date="2005" name="Nature">
        <title>Genomic sequence of the pathogenic and allergenic filamentous fungus Aspergillus fumigatus.</title>
        <authorList>
            <person name="Nierman W.C."/>
            <person name="Pain A."/>
            <person name="Anderson M.J."/>
            <person name="Wortman J.R."/>
            <person name="Kim H.S."/>
            <person name="Arroyo J."/>
            <person name="Berriman M."/>
            <person name="Abe K."/>
            <person name="Archer D.B."/>
            <person name="Bermejo C."/>
            <person name="Bennett J.W."/>
            <person name="Bowyer P."/>
            <person name="Chen D."/>
            <person name="Collins M."/>
            <person name="Coulsen R."/>
            <person name="Davies R."/>
            <person name="Dyer P.S."/>
            <person name="Farman M.L."/>
            <person name="Fedorova N."/>
            <person name="Fedorova N.D."/>
            <person name="Feldblyum T.V."/>
            <person name="Fischer R."/>
            <person name="Fosker N."/>
            <person name="Fraser A."/>
            <person name="Garcia J.L."/>
            <person name="Garcia M.J."/>
            <person name="Goble A."/>
            <person name="Goldman G.H."/>
            <person name="Gomi K."/>
            <person name="Griffith-Jones S."/>
            <person name="Gwilliam R."/>
            <person name="Haas B.J."/>
            <person name="Haas H."/>
            <person name="Harris D.E."/>
            <person name="Horiuchi H."/>
            <person name="Huang J."/>
            <person name="Humphray S."/>
            <person name="Jimenez J."/>
            <person name="Keller N."/>
            <person name="Khouri H."/>
            <person name="Kitamoto K."/>
            <person name="Kobayashi T."/>
            <person name="Konzack S."/>
            <person name="Kulkarni R."/>
            <person name="Kumagai T."/>
            <person name="Lafton A."/>
            <person name="Latge J.-P."/>
            <person name="Li W."/>
            <person name="Lord A."/>
            <person name="Lu C."/>
            <person name="Majoros W.H."/>
            <person name="May G.S."/>
            <person name="Miller B.L."/>
            <person name="Mohamoud Y."/>
            <person name="Molina M."/>
            <person name="Monod M."/>
            <person name="Mouyna I."/>
            <person name="Mulligan S."/>
            <person name="Murphy L.D."/>
            <person name="O'Neil S."/>
            <person name="Paulsen I."/>
            <person name="Penalva M.A."/>
            <person name="Pertea M."/>
            <person name="Price C."/>
            <person name="Pritchard B.L."/>
            <person name="Quail M.A."/>
            <person name="Rabbinowitsch E."/>
            <person name="Rawlins N."/>
            <person name="Rajandream M.A."/>
            <person name="Reichard U."/>
            <person name="Renauld H."/>
            <person name="Robson G.D."/>
            <person name="Rodriguez de Cordoba S."/>
            <person name="Rodriguez-Pena J.M."/>
            <person name="Ronning C.M."/>
            <person name="Rutter S."/>
            <person name="Salzberg S.L."/>
            <person name="Sanchez M."/>
            <person name="Sanchez-Ferrero J.C."/>
            <person name="Saunders D."/>
            <person name="Seeger K."/>
            <person name="Squares R."/>
            <person name="Squares S."/>
            <person name="Takeuchi M."/>
            <person name="Tekaia F."/>
            <person name="Turner G."/>
            <person name="Vazquez de Aldana C.R."/>
            <person name="Weidman J."/>
            <person name="White O."/>
            <person name="Woodward J.R."/>
            <person name="Yu J.-H."/>
            <person name="Fraser C.M."/>
            <person name="Galagan J.E."/>
            <person name="Asai K."/>
            <person name="Machida M."/>
            <person name="Hall N."/>
            <person name="Barrell B.G."/>
            <person name="Denning D.W."/>
        </authorList>
    </citation>
    <scope>NUCLEOTIDE SEQUENCE [LARGE SCALE GENOMIC DNA]</scope>
    <source>
        <strain>ATCC MYA-4609 / CBS 101355 / FGSC A1100 / Af293</strain>
    </source>
</reference>
<feature type="chain" id="PRO_0000278853" description="Vacuolar fusion protein mon1">
    <location>
        <begin position="1"/>
        <end position="621"/>
    </location>
</feature>
<feature type="region of interest" description="Disordered" evidence="3">
    <location>
        <begin position="1"/>
        <end position="93"/>
    </location>
</feature>
<feature type="region of interest" description="Disordered" evidence="3">
    <location>
        <begin position="126"/>
        <end position="145"/>
    </location>
</feature>
<feature type="compositionally biased region" description="Basic and acidic residues" evidence="3">
    <location>
        <begin position="29"/>
        <end position="49"/>
    </location>
</feature>
<feature type="compositionally biased region" description="Low complexity" evidence="3">
    <location>
        <begin position="68"/>
        <end position="79"/>
    </location>
</feature>
<feature type="compositionally biased region" description="Low complexity" evidence="3">
    <location>
        <begin position="126"/>
        <end position="137"/>
    </location>
</feature>
<gene>
    <name type="primary">mon1</name>
    <name type="ORF">AFUA_2G05010</name>
</gene>
<comment type="function">
    <text evidence="2">In complex with CCZ1, is required for multiple vacuole delivery pathways including the cytoplasm to vacuole transport (Cvt), autophagy, pexophagy and endocytosis. The MON1-CCZ1 complex acts at the fusion of vesicles with the vacuole, through its regulation of the SNARE complex during the coordinated priming and docking stages of fusion, and particularly at the stage of tethering/docking.</text>
</comment>
<comment type="subcellular location">
    <subcellularLocation>
        <location evidence="1">Endosome</location>
        <location evidence="1">Multivesicular body membrane</location>
        <topology evidence="1">Peripheral membrane protein</topology>
    </subcellularLocation>
    <subcellularLocation>
        <location evidence="1">Prevacuolar compartment membrane</location>
        <topology evidence="1">Peripheral membrane protein</topology>
    </subcellularLocation>
    <subcellularLocation>
        <location evidence="1">Vacuole membrane</location>
        <topology evidence="1">Peripheral membrane protein</topology>
    </subcellularLocation>
</comment>
<comment type="similarity">
    <text evidence="4">Belongs to the MON1/SAND family.</text>
</comment>
<comment type="sequence caution" evidence="4">
    <conflict type="erroneous gene model prediction">
        <sequence resource="EMBL-CDS" id="EAL87594"/>
    </conflict>
</comment>
<evidence type="ECO:0000250" key="1"/>
<evidence type="ECO:0000250" key="2">
    <source>
        <dbReference type="UniProtKB" id="P53129"/>
    </source>
</evidence>
<evidence type="ECO:0000256" key="3">
    <source>
        <dbReference type="SAM" id="MobiDB-lite"/>
    </source>
</evidence>
<evidence type="ECO:0000305" key="4"/>
<sequence>MNPNALEQPQVAPGDDGAGGNNYGTQENSAKEPSKTGSDDSSARLEERPPPLPPRPNTLSLLDEGFISPRSTRQSSSSSLQAKATTAVSIPDISLLQLNDGGKENHPTRGPFGSLRAKASLTQLTASKGSDAGDSASIRSTAPNTELGEAENVFSDFLAQESGDVQQDSSGLLQFPEFRTDDVEDDFTSEFEPIGELDDDGRNEELLLERWKSKRKHYLILSAAGKPIWTRHGDGGLISGYIGVILTIISFYEDANDRLTSFCAGDTKFVIVTKGPLYLVAISRLLESDTQLKLQLEALYMQILSTLTLPSLTHLFSVRPSTDLKRPLQGSETLLSTLADSFTKGSPSTFLSALECLKIRKSHRQAINNALLKTKVSSLLYGLVVAGGRLVSVVRPKKHSLHPGDLQLLFNMIFEAEGIKAGGGESWIPVCLPGFNSSGYLYMYVSFLDLRENSGTSASETTTEQSVAIILISPNKEGFFEMQEMRNSLVEQLEKNNSINIIKEAIDGGRPTTTDIVPGTVLHHFLYKSRANVQFTMSSYEPEFTSISRRRSIHAKHAHVKVHHCISQSASSFAWVTPIFELYCVASPNANRNALAQSASKVVQWVQREEERLFIIGGAVF</sequence>
<protein>
    <recommendedName>
        <fullName>Vacuolar fusion protein mon1</fullName>
    </recommendedName>
</protein>
<name>MON1_ASPFU</name>